<organism>
    <name type="scientific">Brucella canis (strain ATCC 23365 / NCTC 10854 / RM-666)</name>
    <dbReference type="NCBI Taxonomy" id="483179"/>
    <lineage>
        <taxon>Bacteria</taxon>
        <taxon>Pseudomonadati</taxon>
        <taxon>Pseudomonadota</taxon>
        <taxon>Alphaproteobacteria</taxon>
        <taxon>Hyphomicrobiales</taxon>
        <taxon>Brucellaceae</taxon>
        <taxon>Brucella/Ochrobactrum group</taxon>
        <taxon>Brucella</taxon>
    </lineage>
</organism>
<protein>
    <recommendedName>
        <fullName evidence="1">Chaperonin GroEL</fullName>
        <ecNumber evidence="1">5.6.1.7</ecNumber>
    </recommendedName>
    <alternativeName>
        <fullName evidence="1">60 kDa chaperonin</fullName>
    </alternativeName>
    <alternativeName>
        <fullName evidence="1">Chaperonin-60</fullName>
        <shortName evidence="1">Cpn60</shortName>
    </alternativeName>
</protein>
<proteinExistence type="inferred from homology"/>
<dbReference type="EC" id="5.6.1.7" evidence="1"/>
<dbReference type="EMBL" id="CP000873">
    <property type="protein sequence ID" value="ABX63389.1"/>
    <property type="molecule type" value="Genomic_DNA"/>
</dbReference>
<dbReference type="RefSeq" id="WP_004688851.1">
    <property type="nucleotide sequence ID" value="NC_010104.1"/>
</dbReference>
<dbReference type="SMR" id="A9MDV1"/>
<dbReference type="GeneID" id="55591910"/>
<dbReference type="KEGG" id="bcs:BCAN_B0195"/>
<dbReference type="HOGENOM" id="CLU_016503_3_0_5"/>
<dbReference type="PhylomeDB" id="A9MDV1"/>
<dbReference type="Proteomes" id="UP000001385">
    <property type="component" value="Chromosome II"/>
</dbReference>
<dbReference type="GO" id="GO:0005737">
    <property type="term" value="C:cytoplasm"/>
    <property type="evidence" value="ECO:0007669"/>
    <property type="project" value="UniProtKB-SubCell"/>
</dbReference>
<dbReference type="GO" id="GO:0005524">
    <property type="term" value="F:ATP binding"/>
    <property type="evidence" value="ECO:0007669"/>
    <property type="project" value="UniProtKB-UniRule"/>
</dbReference>
<dbReference type="GO" id="GO:0140662">
    <property type="term" value="F:ATP-dependent protein folding chaperone"/>
    <property type="evidence" value="ECO:0007669"/>
    <property type="project" value="InterPro"/>
</dbReference>
<dbReference type="GO" id="GO:0016853">
    <property type="term" value="F:isomerase activity"/>
    <property type="evidence" value="ECO:0007669"/>
    <property type="project" value="UniProtKB-KW"/>
</dbReference>
<dbReference type="GO" id="GO:0051082">
    <property type="term" value="F:unfolded protein binding"/>
    <property type="evidence" value="ECO:0007669"/>
    <property type="project" value="UniProtKB-UniRule"/>
</dbReference>
<dbReference type="GO" id="GO:0042026">
    <property type="term" value="P:protein refolding"/>
    <property type="evidence" value="ECO:0007669"/>
    <property type="project" value="UniProtKB-UniRule"/>
</dbReference>
<dbReference type="CDD" id="cd03344">
    <property type="entry name" value="GroEL"/>
    <property type="match status" value="1"/>
</dbReference>
<dbReference type="FunFam" id="1.10.560.10:FF:000001">
    <property type="entry name" value="60 kDa chaperonin"/>
    <property type="match status" value="1"/>
</dbReference>
<dbReference type="FunFam" id="3.50.7.10:FF:000001">
    <property type="entry name" value="60 kDa chaperonin"/>
    <property type="match status" value="1"/>
</dbReference>
<dbReference type="Gene3D" id="3.50.7.10">
    <property type="entry name" value="GroEL"/>
    <property type="match status" value="1"/>
</dbReference>
<dbReference type="Gene3D" id="1.10.560.10">
    <property type="entry name" value="GroEL-like equatorial domain"/>
    <property type="match status" value="1"/>
</dbReference>
<dbReference type="Gene3D" id="3.30.260.10">
    <property type="entry name" value="TCP-1-like chaperonin intermediate domain"/>
    <property type="match status" value="1"/>
</dbReference>
<dbReference type="HAMAP" id="MF_00600">
    <property type="entry name" value="CH60"/>
    <property type="match status" value="1"/>
</dbReference>
<dbReference type="InterPro" id="IPR018370">
    <property type="entry name" value="Chaperonin_Cpn60_CS"/>
</dbReference>
<dbReference type="InterPro" id="IPR001844">
    <property type="entry name" value="Cpn60/GroEL"/>
</dbReference>
<dbReference type="InterPro" id="IPR002423">
    <property type="entry name" value="Cpn60/GroEL/TCP-1"/>
</dbReference>
<dbReference type="InterPro" id="IPR027409">
    <property type="entry name" value="GroEL-like_apical_dom_sf"/>
</dbReference>
<dbReference type="InterPro" id="IPR027413">
    <property type="entry name" value="GROEL-like_equatorial_sf"/>
</dbReference>
<dbReference type="InterPro" id="IPR027410">
    <property type="entry name" value="TCP-1-like_intermed_sf"/>
</dbReference>
<dbReference type="NCBIfam" id="TIGR02348">
    <property type="entry name" value="GroEL"/>
    <property type="match status" value="1"/>
</dbReference>
<dbReference type="NCBIfam" id="NF000592">
    <property type="entry name" value="PRK00013.1"/>
    <property type="match status" value="1"/>
</dbReference>
<dbReference type="NCBIfam" id="NF009487">
    <property type="entry name" value="PRK12849.1"/>
    <property type="match status" value="1"/>
</dbReference>
<dbReference type="NCBIfam" id="NF009488">
    <property type="entry name" value="PRK12850.1"/>
    <property type="match status" value="1"/>
</dbReference>
<dbReference type="NCBIfam" id="NF009489">
    <property type="entry name" value="PRK12851.1"/>
    <property type="match status" value="1"/>
</dbReference>
<dbReference type="PANTHER" id="PTHR45633">
    <property type="entry name" value="60 KDA HEAT SHOCK PROTEIN, MITOCHONDRIAL"/>
    <property type="match status" value="1"/>
</dbReference>
<dbReference type="Pfam" id="PF00118">
    <property type="entry name" value="Cpn60_TCP1"/>
    <property type="match status" value="1"/>
</dbReference>
<dbReference type="PRINTS" id="PR00298">
    <property type="entry name" value="CHAPERONIN60"/>
</dbReference>
<dbReference type="SUPFAM" id="SSF52029">
    <property type="entry name" value="GroEL apical domain-like"/>
    <property type="match status" value="1"/>
</dbReference>
<dbReference type="SUPFAM" id="SSF48592">
    <property type="entry name" value="GroEL equatorial domain-like"/>
    <property type="match status" value="1"/>
</dbReference>
<dbReference type="SUPFAM" id="SSF54849">
    <property type="entry name" value="GroEL-intermediate domain like"/>
    <property type="match status" value="1"/>
</dbReference>
<dbReference type="PROSITE" id="PS00296">
    <property type="entry name" value="CHAPERONINS_CPN60"/>
    <property type="match status" value="1"/>
</dbReference>
<feature type="chain" id="PRO_1000082463" description="Chaperonin GroEL">
    <location>
        <begin position="1"/>
        <end position="546"/>
    </location>
</feature>
<feature type="binding site" evidence="1">
    <location>
        <begin position="30"/>
        <end position="33"/>
    </location>
    <ligand>
        <name>ATP</name>
        <dbReference type="ChEBI" id="CHEBI:30616"/>
    </ligand>
</feature>
<feature type="binding site" evidence="1">
    <location>
        <position position="51"/>
    </location>
    <ligand>
        <name>ATP</name>
        <dbReference type="ChEBI" id="CHEBI:30616"/>
    </ligand>
</feature>
<feature type="binding site" evidence="1">
    <location>
        <begin position="87"/>
        <end position="91"/>
    </location>
    <ligand>
        <name>ATP</name>
        <dbReference type="ChEBI" id="CHEBI:30616"/>
    </ligand>
</feature>
<feature type="binding site" evidence="1">
    <location>
        <position position="415"/>
    </location>
    <ligand>
        <name>ATP</name>
        <dbReference type="ChEBI" id="CHEBI:30616"/>
    </ligand>
</feature>
<feature type="binding site" evidence="1">
    <location>
        <position position="495"/>
    </location>
    <ligand>
        <name>ATP</name>
        <dbReference type="ChEBI" id="CHEBI:30616"/>
    </ligand>
</feature>
<evidence type="ECO:0000255" key="1">
    <source>
        <dbReference type="HAMAP-Rule" id="MF_00600"/>
    </source>
</evidence>
<comment type="function">
    <text evidence="1">Together with its co-chaperonin GroES, plays an essential role in assisting protein folding. The GroEL-GroES system forms a nano-cage that allows encapsulation of the non-native substrate proteins and provides a physical environment optimized to promote and accelerate protein folding.</text>
</comment>
<comment type="catalytic activity">
    <reaction evidence="1">
        <text>ATP + H2O + a folded polypeptide = ADP + phosphate + an unfolded polypeptide.</text>
        <dbReference type="EC" id="5.6.1.7"/>
    </reaction>
</comment>
<comment type="subunit">
    <text evidence="1">Forms a cylinder of 14 subunits composed of two heptameric rings stacked back-to-back. Interacts with the co-chaperonin GroES.</text>
</comment>
<comment type="subcellular location">
    <subcellularLocation>
        <location evidence="1">Cytoplasm</location>
    </subcellularLocation>
</comment>
<comment type="similarity">
    <text evidence="1">Belongs to the chaperonin (HSP60) family.</text>
</comment>
<accession>A9MDV1</accession>
<reference key="1">
    <citation type="submission" date="2007-10" db="EMBL/GenBank/DDBJ databases">
        <title>Brucella canis ATCC 23365 whole genome shotgun sequencing project.</title>
        <authorList>
            <person name="Setubal J.C."/>
            <person name="Bowns C."/>
            <person name="Boyle S."/>
            <person name="Crasta O.R."/>
            <person name="Czar M.J."/>
            <person name="Dharmanolla C."/>
            <person name="Gillespie J.J."/>
            <person name="Kenyon R.W."/>
            <person name="Lu J."/>
            <person name="Mane S."/>
            <person name="Mohapatra S."/>
            <person name="Nagrani S."/>
            <person name="Purkayastha A."/>
            <person name="Rajasimha H.K."/>
            <person name="Shallom J.M."/>
            <person name="Shallom S."/>
            <person name="Shukla M."/>
            <person name="Snyder E.E."/>
            <person name="Sobral B.W."/>
            <person name="Wattam A.R."/>
            <person name="Will R."/>
            <person name="Williams K."/>
            <person name="Yoo H."/>
            <person name="Bruce D."/>
            <person name="Detter C."/>
            <person name="Munk C."/>
            <person name="Brettin T.S."/>
        </authorList>
    </citation>
    <scope>NUCLEOTIDE SEQUENCE [LARGE SCALE GENOMIC DNA]</scope>
    <source>
        <strain>ATCC 23365 / NCTC 10854 / RM-666</strain>
    </source>
</reference>
<gene>
    <name evidence="1" type="primary">groEL</name>
    <name evidence="1" type="synonym">groL</name>
    <name type="ordered locus">BCAN_B0195</name>
</gene>
<name>CH60_BRUC2</name>
<sequence>MAAKDVKFGRTAREKMLRGVDILADAVKVTLGPKGRNVVIDKSFGAPRITKDGVSVAKEVELEDKFENMGAQMLREVASKTNDTAGDGTTTATVLGQAIVQEGAKAVAAGMNPMDLKRGIDLAVNEVVAELLKKAKKINTSEEVAQVGTISANGEAEIGKMIAEAMQKVGNEGVITVEEAKTAETELEVVEGMQFDRGYLSPYFVTNPEKMVADLEDAYILLHEKKLSNLQALLPVLEAVVQTSKPLLIIAEDVEGEALATLVVNKLRGGLKIAAVKAPGFGDRRKAMLEDIAILTGGQVISEDLGIKLESVTLDMLGRAKKVSISKENTTIVDGAGQKAEIDARVGQIKQQIEETTSDYDREKLQERLAKLAGGVAVIRVGGATEVEVKEKKDRVDDALNATRAAVEEGIVAGGGTALLRASTKITAKGVNADQEAGINIVRRAIQAPARQITTNAGEEASVIVGKILENTSETFGYNTANGEYGDLISLGIVDPVKVVRTALQNAASVAGLLITTEAMIAELPKKDAAPAGMPGGMGGMGGMDF</sequence>
<keyword id="KW-0067">ATP-binding</keyword>
<keyword id="KW-0143">Chaperone</keyword>
<keyword id="KW-0963">Cytoplasm</keyword>
<keyword id="KW-0413">Isomerase</keyword>
<keyword id="KW-0547">Nucleotide-binding</keyword>
<keyword id="KW-1185">Reference proteome</keyword>